<sequence length="546" mass="61358">MQFVEFAEICNTIEGTSSRLATADILAEKFPLLTEEELPVFVRFMRGRLFPDWSSEKLGFGPNLLYDALAYVIGKKRSYVVSAINNAGDIGKVVESLIEKREQTMFFSEELDLLDVNARFLQMAKSSGRRSQQERLRSAQYLLSNATPLEGRYLARLMLEEMRIGVGEGVVKDAVSKAFGVPSDIVEHAHQALNDLGEVAFLAKTDPSRLSNVHITAFRPVKMMLAQQGSITSMVETHGTLAAENKYDGSRFQFHKSGGKCAIYSRRLEEMTASLPDVVKMLDKATDHDVIIDGEVIAIMNGKPMPFQTILRRIRRKHDVGDAQEAITLLPWVFDILAADGETLIDLPFRERRKILESVMNAYVAPQLVSDSAEEIEAYYHSSLDNGNEGIMLKVLDSPYLPGNRGKLWIKIKPEVDTIDLVVTAAEWGEGKRAKMFGSFLLACQDENGDLLEISRVATGIDDSMLSTLYDLFKDKIIAEKGKTVTFEPDVVFEVGYAELQKSTNYEAGYALRFPRFVRLRDDKDVSEIETLESLTRRYSLQNKEE</sequence>
<gene>
    <name evidence="1" type="primary">lig</name>
    <name type="ordered locus">Mlab_0620</name>
</gene>
<proteinExistence type="inferred from homology"/>
<reference key="1">
    <citation type="journal article" date="2009" name="Stand. Genomic Sci.">
        <title>Complete genome sequence of Methanocorpusculum labreanum type strain Z.</title>
        <authorList>
            <person name="Anderson I.J."/>
            <person name="Sieprawska-Lupa M."/>
            <person name="Goltsman E."/>
            <person name="Lapidus A."/>
            <person name="Copeland A."/>
            <person name="Glavina Del Rio T."/>
            <person name="Tice H."/>
            <person name="Dalin E."/>
            <person name="Barry K."/>
            <person name="Pitluck S."/>
            <person name="Hauser L."/>
            <person name="Land M."/>
            <person name="Lucas S."/>
            <person name="Richardson P."/>
            <person name="Whitman W.B."/>
            <person name="Kyrpides N.C."/>
        </authorList>
    </citation>
    <scope>NUCLEOTIDE SEQUENCE [LARGE SCALE GENOMIC DNA]</scope>
    <source>
        <strain>ATCC 43576 / DSM 4855 / Z</strain>
    </source>
</reference>
<comment type="function">
    <text evidence="1">DNA ligase that seals nicks in double-stranded DNA during DNA replication, DNA recombination and DNA repair.</text>
</comment>
<comment type="catalytic activity">
    <reaction evidence="1">
        <text>ATP + (deoxyribonucleotide)n-3'-hydroxyl + 5'-phospho-(deoxyribonucleotide)m = (deoxyribonucleotide)n+m + AMP + diphosphate.</text>
        <dbReference type="EC" id="6.5.1.1"/>
    </reaction>
</comment>
<comment type="cofactor">
    <cofactor evidence="1">
        <name>Mg(2+)</name>
        <dbReference type="ChEBI" id="CHEBI:18420"/>
    </cofactor>
</comment>
<comment type="similarity">
    <text evidence="1">Belongs to the ATP-dependent DNA ligase family.</text>
</comment>
<protein>
    <recommendedName>
        <fullName evidence="1">DNA ligase</fullName>
        <ecNumber evidence="1">6.5.1.1</ecNumber>
    </recommendedName>
    <alternativeName>
        <fullName evidence="1">Polydeoxyribonucleotide synthase [ATP]</fullName>
    </alternativeName>
</protein>
<accession>A2SR38</accession>
<organism>
    <name type="scientific">Methanocorpusculum labreanum (strain ATCC 43576 / DSM 4855 / Z)</name>
    <dbReference type="NCBI Taxonomy" id="410358"/>
    <lineage>
        <taxon>Archaea</taxon>
        <taxon>Methanobacteriati</taxon>
        <taxon>Methanobacteriota</taxon>
        <taxon>Stenosarchaea group</taxon>
        <taxon>Methanomicrobia</taxon>
        <taxon>Methanomicrobiales</taxon>
        <taxon>Methanocorpusculaceae</taxon>
        <taxon>Methanocorpusculum</taxon>
    </lineage>
</organism>
<keyword id="KW-0067">ATP-binding</keyword>
<keyword id="KW-0131">Cell cycle</keyword>
<keyword id="KW-0132">Cell division</keyword>
<keyword id="KW-0227">DNA damage</keyword>
<keyword id="KW-0233">DNA recombination</keyword>
<keyword id="KW-0234">DNA repair</keyword>
<keyword id="KW-0235">DNA replication</keyword>
<keyword id="KW-0436">Ligase</keyword>
<keyword id="KW-0460">Magnesium</keyword>
<keyword id="KW-0479">Metal-binding</keyword>
<keyword id="KW-0547">Nucleotide-binding</keyword>
<keyword id="KW-1185">Reference proteome</keyword>
<feature type="chain" id="PRO_0000365254" description="DNA ligase">
    <location>
        <begin position="1"/>
        <end position="546"/>
    </location>
</feature>
<feature type="active site" description="N6-AMP-lysine intermediate" evidence="1">
    <location>
        <position position="246"/>
    </location>
</feature>
<feature type="binding site" evidence="1">
    <location>
        <position position="244"/>
    </location>
    <ligand>
        <name>ATP</name>
        <dbReference type="ChEBI" id="CHEBI:30616"/>
    </ligand>
</feature>
<feature type="binding site" evidence="1">
    <location>
        <position position="251"/>
    </location>
    <ligand>
        <name>ATP</name>
        <dbReference type="ChEBI" id="CHEBI:30616"/>
    </ligand>
</feature>
<feature type="binding site" evidence="1">
    <location>
        <position position="266"/>
    </location>
    <ligand>
        <name>ATP</name>
        <dbReference type="ChEBI" id="CHEBI:30616"/>
    </ligand>
</feature>
<feature type="binding site" evidence="1">
    <location>
        <position position="295"/>
    </location>
    <ligand>
        <name>ATP</name>
        <dbReference type="ChEBI" id="CHEBI:30616"/>
    </ligand>
</feature>
<feature type="binding site" evidence="1">
    <location>
        <position position="334"/>
    </location>
    <ligand>
        <name>ATP</name>
        <dbReference type="ChEBI" id="CHEBI:30616"/>
    </ligand>
</feature>
<feature type="binding site" evidence="1">
    <location>
        <position position="405"/>
    </location>
    <ligand>
        <name>ATP</name>
        <dbReference type="ChEBI" id="CHEBI:30616"/>
    </ligand>
</feature>
<feature type="binding site" evidence="1">
    <location>
        <position position="411"/>
    </location>
    <ligand>
        <name>ATP</name>
        <dbReference type="ChEBI" id="CHEBI:30616"/>
    </ligand>
</feature>
<evidence type="ECO:0000255" key="1">
    <source>
        <dbReference type="HAMAP-Rule" id="MF_00407"/>
    </source>
</evidence>
<dbReference type="EC" id="6.5.1.1" evidence="1"/>
<dbReference type="EMBL" id="CP000559">
    <property type="protein sequence ID" value="ABN06794.1"/>
    <property type="molecule type" value="Genomic_DNA"/>
</dbReference>
<dbReference type="RefSeq" id="WP_011832995.1">
    <property type="nucleotide sequence ID" value="NC_008942.1"/>
</dbReference>
<dbReference type="SMR" id="A2SR38"/>
<dbReference type="STRING" id="410358.Mlab_0620"/>
<dbReference type="GeneID" id="4795702"/>
<dbReference type="KEGG" id="mla:Mlab_0620"/>
<dbReference type="eggNOG" id="arCOG01347">
    <property type="taxonomic scope" value="Archaea"/>
</dbReference>
<dbReference type="HOGENOM" id="CLU_005138_6_0_2"/>
<dbReference type="OrthoDB" id="31274at2157"/>
<dbReference type="Proteomes" id="UP000000365">
    <property type="component" value="Chromosome"/>
</dbReference>
<dbReference type="GO" id="GO:0005524">
    <property type="term" value="F:ATP binding"/>
    <property type="evidence" value="ECO:0007669"/>
    <property type="project" value="UniProtKB-UniRule"/>
</dbReference>
<dbReference type="GO" id="GO:0003677">
    <property type="term" value="F:DNA binding"/>
    <property type="evidence" value="ECO:0007669"/>
    <property type="project" value="InterPro"/>
</dbReference>
<dbReference type="GO" id="GO:0003910">
    <property type="term" value="F:DNA ligase (ATP) activity"/>
    <property type="evidence" value="ECO:0007669"/>
    <property type="project" value="UniProtKB-UniRule"/>
</dbReference>
<dbReference type="GO" id="GO:0046872">
    <property type="term" value="F:metal ion binding"/>
    <property type="evidence" value="ECO:0007669"/>
    <property type="project" value="UniProtKB-KW"/>
</dbReference>
<dbReference type="GO" id="GO:0051301">
    <property type="term" value="P:cell division"/>
    <property type="evidence" value="ECO:0007669"/>
    <property type="project" value="UniProtKB-KW"/>
</dbReference>
<dbReference type="GO" id="GO:0071897">
    <property type="term" value="P:DNA biosynthetic process"/>
    <property type="evidence" value="ECO:0007669"/>
    <property type="project" value="InterPro"/>
</dbReference>
<dbReference type="GO" id="GO:0006310">
    <property type="term" value="P:DNA recombination"/>
    <property type="evidence" value="ECO:0007669"/>
    <property type="project" value="UniProtKB-UniRule"/>
</dbReference>
<dbReference type="GO" id="GO:0006281">
    <property type="term" value="P:DNA repair"/>
    <property type="evidence" value="ECO:0007669"/>
    <property type="project" value="UniProtKB-UniRule"/>
</dbReference>
<dbReference type="GO" id="GO:0006273">
    <property type="term" value="P:lagging strand elongation"/>
    <property type="evidence" value="ECO:0007669"/>
    <property type="project" value="TreeGrafter"/>
</dbReference>
<dbReference type="CDD" id="cd07901">
    <property type="entry name" value="Adenylation_DNA_ligase_Arch_LigB"/>
    <property type="match status" value="1"/>
</dbReference>
<dbReference type="CDD" id="cd07972">
    <property type="entry name" value="OBF_DNA_ligase_Arch_LigB"/>
    <property type="match status" value="1"/>
</dbReference>
<dbReference type="Gene3D" id="1.10.3260.10">
    <property type="entry name" value="DNA ligase, ATP-dependent, N-terminal domain"/>
    <property type="match status" value="1"/>
</dbReference>
<dbReference type="Gene3D" id="3.30.470.30">
    <property type="entry name" value="DNA ligase/mRNA capping enzyme"/>
    <property type="match status" value="1"/>
</dbReference>
<dbReference type="Gene3D" id="2.40.50.140">
    <property type="entry name" value="Nucleic acid-binding proteins"/>
    <property type="match status" value="1"/>
</dbReference>
<dbReference type="HAMAP" id="MF_00407">
    <property type="entry name" value="DNA_ligase"/>
    <property type="match status" value="1"/>
</dbReference>
<dbReference type="InterPro" id="IPR050191">
    <property type="entry name" value="ATP-dep_DNA_ligase"/>
</dbReference>
<dbReference type="InterPro" id="IPR022865">
    <property type="entry name" value="DNA_ligae_ATP-dep_bac/arc"/>
</dbReference>
<dbReference type="InterPro" id="IPR000977">
    <property type="entry name" value="DNA_ligase_ATP-dep"/>
</dbReference>
<dbReference type="InterPro" id="IPR012309">
    <property type="entry name" value="DNA_ligase_ATP-dep_C"/>
</dbReference>
<dbReference type="InterPro" id="IPR012310">
    <property type="entry name" value="DNA_ligase_ATP-dep_cent"/>
</dbReference>
<dbReference type="InterPro" id="IPR012308">
    <property type="entry name" value="DNA_ligase_ATP-dep_N"/>
</dbReference>
<dbReference type="InterPro" id="IPR036599">
    <property type="entry name" value="DNA_ligase_N_sf"/>
</dbReference>
<dbReference type="InterPro" id="IPR012340">
    <property type="entry name" value="NA-bd_OB-fold"/>
</dbReference>
<dbReference type="NCBIfam" id="TIGR00574">
    <property type="entry name" value="dnl1"/>
    <property type="match status" value="1"/>
</dbReference>
<dbReference type="PANTHER" id="PTHR45674:SF7">
    <property type="entry name" value="DNA LIGASE"/>
    <property type="match status" value="1"/>
</dbReference>
<dbReference type="PANTHER" id="PTHR45674">
    <property type="entry name" value="DNA LIGASE 1/3 FAMILY MEMBER"/>
    <property type="match status" value="1"/>
</dbReference>
<dbReference type="Pfam" id="PF04679">
    <property type="entry name" value="DNA_ligase_A_C"/>
    <property type="match status" value="1"/>
</dbReference>
<dbReference type="Pfam" id="PF01068">
    <property type="entry name" value="DNA_ligase_A_M"/>
    <property type="match status" value="1"/>
</dbReference>
<dbReference type="Pfam" id="PF04675">
    <property type="entry name" value="DNA_ligase_A_N"/>
    <property type="match status" value="1"/>
</dbReference>
<dbReference type="SUPFAM" id="SSF117018">
    <property type="entry name" value="ATP-dependent DNA ligase DNA-binding domain"/>
    <property type="match status" value="1"/>
</dbReference>
<dbReference type="SUPFAM" id="SSF56091">
    <property type="entry name" value="DNA ligase/mRNA capping enzyme, catalytic domain"/>
    <property type="match status" value="1"/>
</dbReference>
<dbReference type="SUPFAM" id="SSF50249">
    <property type="entry name" value="Nucleic acid-binding proteins"/>
    <property type="match status" value="1"/>
</dbReference>
<dbReference type="PROSITE" id="PS50160">
    <property type="entry name" value="DNA_LIGASE_A3"/>
    <property type="match status" value="1"/>
</dbReference>
<name>DNLI_METLZ</name>